<sequence length="414" mass="48386">MNVTVRFLRPFARCLVPYTFHRKRSHLYSGVLQRYMSSKAPSLSCHNKDSASPPEQLELDGWKATMKSSIQEDGVSEVSDKDEDSLASTRELIEMWRLLGKEVPEHITEEDLKTLMECASKSAKKKYLRYLYGKEKAKKAKQVKKEMKAEAREEAKRARLLETTAEEQQQDFMFLRLWDRQINIALGWKGVQAMQFGQPLVFDMAYDNYMKPSELQNTVSQLLESEGWNRRNVDPFHIYFCNLKIDSAYHRELVKRYREKWDKLLLTATEKSPVDLFPKDSIIYLTADSPNVMTTFKHDKIYIIGSFVDKNTQTGTSLAKAKRLNIATECLPLDKYLQWEIGNKNLTLDQMIRILLCLKNTGNWEEALKFVPRRKHTGYLEVSEQSQELVRKLKKTKTLNSFRKGSLNVRTWKR</sequence>
<name>TM10C_MOUSE</name>
<protein>
    <recommendedName>
        <fullName evidence="4">tRNA methyltransferase 10 homolog C</fullName>
    </recommendedName>
    <alternativeName>
        <fullName evidence="1">Mitochondrial ribonuclease P protein 1</fullName>
        <shortName evidence="1">Mitochondrial RNase P protein 1</shortName>
    </alternativeName>
    <alternativeName>
        <fullName evidence="1">RNA (guanine-9-)-methyltransferase domain-containing protein 1</fullName>
    </alternativeName>
    <alternativeName>
        <fullName evidence="1">mRNA methyladenosine-N(1)-methyltransferase</fullName>
        <ecNumber evidence="1">2.1.1.-</ecNumber>
    </alternativeName>
    <alternativeName>
        <fullName evidence="1">tRNA (adenine(9)-N(1))-methyltransferase</fullName>
        <ecNumber evidence="1">2.1.1.218</ecNumber>
    </alternativeName>
    <alternativeName>
        <fullName evidence="1">tRNA (guanine(9)-N(1))-methyltransferase</fullName>
        <ecNumber evidence="1">2.1.1.221</ecNumber>
    </alternativeName>
</protein>
<organism>
    <name type="scientific">Mus musculus</name>
    <name type="common">Mouse</name>
    <dbReference type="NCBI Taxonomy" id="10090"/>
    <lineage>
        <taxon>Eukaryota</taxon>
        <taxon>Metazoa</taxon>
        <taxon>Chordata</taxon>
        <taxon>Craniata</taxon>
        <taxon>Vertebrata</taxon>
        <taxon>Euteleostomi</taxon>
        <taxon>Mammalia</taxon>
        <taxon>Eutheria</taxon>
        <taxon>Euarchontoglires</taxon>
        <taxon>Glires</taxon>
        <taxon>Rodentia</taxon>
        <taxon>Myomorpha</taxon>
        <taxon>Muroidea</taxon>
        <taxon>Muridae</taxon>
        <taxon>Murinae</taxon>
        <taxon>Mus</taxon>
        <taxon>Mus</taxon>
    </lineage>
</organism>
<keyword id="KW-0175">Coiled coil</keyword>
<keyword id="KW-0489">Methyltransferase</keyword>
<keyword id="KW-0496">Mitochondrion</keyword>
<keyword id="KW-1135">Mitochondrion nucleoid</keyword>
<keyword id="KW-0597">Phosphoprotein</keyword>
<keyword id="KW-1185">Reference proteome</keyword>
<keyword id="KW-0949">S-adenosyl-L-methionine</keyword>
<keyword id="KW-0808">Transferase</keyword>
<keyword id="KW-0809">Transit peptide</keyword>
<keyword id="KW-0819">tRNA processing</keyword>
<gene>
    <name evidence="5" type="primary">Trmt10c</name>
    <name type="synonym">Mrpp1</name>
    <name type="synonym">Rg9mtd1</name>
</gene>
<dbReference type="EC" id="2.1.1.-" evidence="1"/>
<dbReference type="EC" id="2.1.1.218" evidence="1"/>
<dbReference type="EC" id="2.1.1.221" evidence="1"/>
<dbReference type="EMBL" id="AK005047">
    <property type="protein sequence ID" value="BAB23773.1"/>
    <property type="molecule type" value="mRNA"/>
</dbReference>
<dbReference type="EMBL" id="AK087991">
    <property type="protein sequence ID" value="BAC40080.1"/>
    <property type="molecule type" value="mRNA"/>
</dbReference>
<dbReference type="EMBL" id="AK135426">
    <property type="protein sequence ID" value="BAE22529.1"/>
    <property type="molecule type" value="mRNA"/>
</dbReference>
<dbReference type="EMBL" id="AK148219">
    <property type="protein sequence ID" value="BAE28421.1"/>
    <property type="molecule type" value="mRNA"/>
</dbReference>
<dbReference type="EMBL" id="AK166781">
    <property type="protein sequence ID" value="BAE39015.1"/>
    <property type="molecule type" value="mRNA"/>
</dbReference>
<dbReference type="EMBL" id="BC023147">
    <property type="protein sequence ID" value="AAH23147.1"/>
    <property type="molecule type" value="mRNA"/>
</dbReference>
<dbReference type="EMBL" id="BC106131">
    <property type="protein sequence ID" value="AAI06132.1"/>
    <property type="molecule type" value="mRNA"/>
</dbReference>
<dbReference type="CCDS" id="CCDS28220.1"/>
<dbReference type="RefSeq" id="NP_083368.1">
    <property type="nucleotide sequence ID" value="NM_029092.4"/>
</dbReference>
<dbReference type="SMR" id="Q3UFY8"/>
<dbReference type="BioGRID" id="206672">
    <property type="interactions" value="16"/>
</dbReference>
<dbReference type="FunCoup" id="Q3UFY8">
    <property type="interactions" value="3102"/>
</dbReference>
<dbReference type="STRING" id="10090.ENSMUSP00000058954"/>
<dbReference type="GlyGen" id="Q3UFY8">
    <property type="glycosylation" value="1 site, 1 O-linked glycan (1 site)"/>
</dbReference>
<dbReference type="iPTMnet" id="Q3UFY8"/>
<dbReference type="PhosphoSitePlus" id="Q3UFY8"/>
<dbReference type="SwissPalm" id="Q3UFY8"/>
<dbReference type="jPOST" id="Q3UFY8"/>
<dbReference type="PaxDb" id="10090-ENSMUSP00000058954"/>
<dbReference type="PeptideAtlas" id="Q3UFY8"/>
<dbReference type="ProteomicsDB" id="259459"/>
<dbReference type="Pumba" id="Q3UFY8"/>
<dbReference type="Antibodypedia" id="32284">
    <property type="antibodies" value="89 antibodies from 19 providers"/>
</dbReference>
<dbReference type="DNASU" id="52575"/>
<dbReference type="Ensembl" id="ENSMUST00000059052.9">
    <property type="protein sequence ID" value="ENSMUSP00000058954.9"/>
    <property type="gene ID" value="ENSMUSG00000044763.9"/>
</dbReference>
<dbReference type="GeneID" id="52575"/>
<dbReference type="KEGG" id="mmu:52575"/>
<dbReference type="UCSC" id="uc007zmd.1">
    <property type="organism name" value="mouse"/>
</dbReference>
<dbReference type="AGR" id="MGI:1196261"/>
<dbReference type="CTD" id="54931"/>
<dbReference type="MGI" id="MGI:1196261">
    <property type="gene designation" value="Trmt10c"/>
</dbReference>
<dbReference type="VEuPathDB" id="HostDB:ENSMUSG00000044763"/>
<dbReference type="eggNOG" id="KOG2967">
    <property type="taxonomic scope" value="Eukaryota"/>
</dbReference>
<dbReference type="GeneTree" id="ENSGT00530000063169"/>
<dbReference type="HOGENOM" id="CLU_034384_3_1_1"/>
<dbReference type="InParanoid" id="Q3UFY8"/>
<dbReference type="OMA" id="TIMECVS"/>
<dbReference type="OrthoDB" id="9976048at2759"/>
<dbReference type="PhylomeDB" id="Q3UFY8"/>
<dbReference type="TreeFam" id="TF319795"/>
<dbReference type="BioGRID-ORCS" id="52575">
    <property type="hits" value="24 hits in 79 CRISPR screens"/>
</dbReference>
<dbReference type="ChiTaRS" id="Trmt10c">
    <property type="organism name" value="mouse"/>
</dbReference>
<dbReference type="PRO" id="PR:Q3UFY8"/>
<dbReference type="Proteomes" id="UP000000589">
    <property type="component" value="Chromosome 16"/>
</dbReference>
<dbReference type="RNAct" id="Q3UFY8">
    <property type="molecule type" value="protein"/>
</dbReference>
<dbReference type="Bgee" id="ENSMUSG00000044763">
    <property type="expression patterns" value="Expressed in basal plate medulla oblongata and 114 other cell types or tissues"/>
</dbReference>
<dbReference type="GO" id="GO:0042645">
    <property type="term" value="C:mitochondrial nucleoid"/>
    <property type="evidence" value="ECO:0000250"/>
    <property type="project" value="UniProtKB"/>
</dbReference>
<dbReference type="GO" id="GO:0030678">
    <property type="term" value="C:mitochondrial ribonuclease P complex"/>
    <property type="evidence" value="ECO:0007669"/>
    <property type="project" value="Ensembl"/>
</dbReference>
<dbReference type="GO" id="GO:0005739">
    <property type="term" value="C:mitochondrion"/>
    <property type="evidence" value="ECO:0000314"/>
    <property type="project" value="MGI"/>
</dbReference>
<dbReference type="GO" id="GO:0005654">
    <property type="term" value="C:nucleoplasm"/>
    <property type="evidence" value="ECO:0007669"/>
    <property type="project" value="Ensembl"/>
</dbReference>
<dbReference type="GO" id="GO:0043527">
    <property type="term" value="C:tRNA methyltransferase complex"/>
    <property type="evidence" value="ECO:0007669"/>
    <property type="project" value="Ensembl"/>
</dbReference>
<dbReference type="GO" id="GO:0042802">
    <property type="term" value="F:identical protein binding"/>
    <property type="evidence" value="ECO:0007669"/>
    <property type="project" value="Ensembl"/>
</dbReference>
<dbReference type="GO" id="GO:0160106">
    <property type="term" value="F:tRNA (adenine(9)-N1)-methyltransferase activity"/>
    <property type="evidence" value="ECO:0007669"/>
    <property type="project" value="UniProtKB-EC"/>
</dbReference>
<dbReference type="GO" id="GO:0052905">
    <property type="term" value="F:tRNA (guanosine(9)-N1)-methyltransferase activity"/>
    <property type="evidence" value="ECO:0007669"/>
    <property type="project" value="UniProtKB-EC"/>
</dbReference>
<dbReference type="GO" id="GO:0000049">
    <property type="term" value="F:tRNA binding"/>
    <property type="evidence" value="ECO:0000250"/>
    <property type="project" value="UniProtKB"/>
</dbReference>
<dbReference type="GO" id="GO:0000964">
    <property type="term" value="P:mitochondrial RNA 5'-end processing"/>
    <property type="evidence" value="ECO:0000250"/>
    <property type="project" value="UniProtKB"/>
</dbReference>
<dbReference type="GO" id="GO:1990180">
    <property type="term" value="P:mitochondrial tRNA 3'-end processing"/>
    <property type="evidence" value="ECO:0007669"/>
    <property type="project" value="Ensembl"/>
</dbReference>
<dbReference type="GO" id="GO:0097745">
    <property type="term" value="P:mitochondrial tRNA 5'-end processing"/>
    <property type="evidence" value="ECO:0000250"/>
    <property type="project" value="UniProtKB"/>
</dbReference>
<dbReference type="GO" id="GO:0070901">
    <property type="term" value="P:mitochondrial tRNA methylation"/>
    <property type="evidence" value="ECO:0007669"/>
    <property type="project" value="Ensembl"/>
</dbReference>
<dbReference type="GO" id="GO:0090646">
    <property type="term" value="P:mitochondrial tRNA processing"/>
    <property type="evidence" value="ECO:0000250"/>
    <property type="project" value="UniProtKB"/>
</dbReference>
<dbReference type="GO" id="GO:0006397">
    <property type="term" value="P:mRNA processing"/>
    <property type="evidence" value="ECO:0000250"/>
    <property type="project" value="UniProtKB"/>
</dbReference>
<dbReference type="GO" id="GO:0070131">
    <property type="term" value="P:positive regulation of mitochondrial translation"/>
    <property type="evidence" value="ECO:0000250"/>
    <property type="project" value="UniProtKB"/>
</dbReference>
<dbReference type="CDD" id="cd18102">
    <property type="entry name" value="Trm10_MRRP1"/>
    <property type="match status" value="1"/>
</dbReference>
<dbReference type="FunFam" id="3.40.1280.30:FF:000003">
    <property type="entry name" value="tRNA methyltransferase 10C, mitochondrial RNase P subunit"/>
    <property type="match status" value="1"/>
</dbReference>
<dbReference type="Gene3D" id="3.40.1280.30">
    <property type="match status" value="1"/>
</dbReference>
<dbReference type="InterPro" id="IPR028564">
    <property type="entry name" value="MT_TRM10-typ"/>
</dbReference>
<dbReference type="InterPro" id="IPR038459">
    <property type="entry name" value="MT_TRM10-typ_sf"/>
</dbReference>
<dbReference type="InterPro" id="IPR025812">
    <property type="entry name" value="Trm10_C_MTase_dom"/>
</dbReference>
<dbReference type="InterPro" id="IPR007356">
    <property type="entry name" value="tRNA_m1G_MeTrfase_euk"/>
</dbReference>
<dbReference type="InterPro" id="IPR016009">
    <property type="entry name" value="tRNA_MeTrfase_TRMD/TRM10"/>
</dbReference>
<dbReference type="PANTHER" id="PTHR13563">
    <property type="entry name" value="TRNA (GUANINE-9-) METHYLTRANSFERASE"/>
    <property type="match status" value="1"/>
</dbReference>
<dbReference type="PANTHER" id="PTHR13563:SF5">
    <property type="entry name" value="TRNA METHYLTRANSFERASE 10 HOMOLOG C"/>
    <property type="match status" value="1"/>
</dbReference>
<dbReference type="Pfam" id="PF01746">
    <property type="entry name" value="tRNA_m1G_MT"/>
    <property type="match status" value="1"/>
</dbReference>
<dbReference type="PROSITE" id="PS51675">
    <property type="entry name" value="SAM_MT_TRM10"/>
    <property type="match status" value="1"/>
</dbReference>
<proteinExistence type="evidence at protein level"/>
<comment type="function">
    <text evidence="1">Mitochondrial tRNA N(1)-methyltransferase involved in mitochondrial tRNA maturation. Component of mitochondrial ribonuclease P, a complex composed of TRMT10C/MRPP1, HSD17B10/MRPP2 and PRORP/MRPP3, which cleaves tRNA molecules in their 5'-ends. Together with HSD17B10/MRPP2, forms a subcomplex of the mitochondrial ribonuclease P, named MRPP1-MRPP2 subcomplex, which displays functions that are independent of the ribonuclease P activity. The MRPP1-MRPP2 subcomplex catalyzes the formation of N(1)-methylguanine and N(1)-methyladenine at position 9 (m1G9 and m1A9, respectively) in tRNAs; TRMT10C/MRPP1 acting as the catalytic N(1)-methyltransferase subunit. The MRPP1-MRPP2 subcomplex also acts as a tRNA maturation platform: following 5'-end cleavage by the mitochondrial ribonuclease P complex, the MRPP1-MRPP2 subcomplex enhances the efficiency of 3'-processing catalyzed by ELAC2, retains the tRNA product after ELAC2 processing and presents the nascent tRNA to the mitochondrial CCA tRNA nucleotidyltransferase TRNT1 enzyme. In addition to tRNA N(1)-methyltransferase activity, TRMT10C/MRPP1 also acts as a mRNA N(1)-methyltransferase by mediating methylation of adenosine residues at the N(1) position of MT-ND5 mRNA. Associates with mitochondrial DNA complexes at the nucleoids to initiate RNA processing and ribosome assembly.</text>
</comment>
<comment type="catalytic activity">
    <reaction evidence="1">
        <text>adenosine(9) in tRNA + S-adenosyl-L-methionine = N(1)-methyladenosine(9) in tRNA + S-adenosyl-L-homocysteine + H(+)</text>
        <dbReference type="Rhea" id="RHEA:43148"/>
        <dbReference type="Rhea" id="RHEA-COMP:10363"/>
        <dbReference type="Rhea" id="RHEA-COMP:10364"/>
        <dbReference type="ChEBI" id="CHEBI:15378"/>
        <dbReference type="ChEBI" id="CHEBI:57856"/>
        <dbReference type="ChEBI" id="CHEBI:59789"/>
        <dbReference type="ChEBI" id="CHEBI:74411"/>
        <dbReference type="ChEBI" id="CHEBI:74491"/>
        <dbReference type="EC" id="2.1.1.218"/>
    </reaction>
</comment>
<comment type="catalytic activity">
    <reaction evidence="1">
        <text>guanosine(9) in tRNA + S-adenosyl-L-methionine = N(1)-methylguanosine(9) in tRNA + S-adenosyl-L-homocysteine + H(+)</text>
        <dbReference type="Rhea" id="RHEA:43156"/>
        <dbReference type="Rhea" id="RHEA-COMP:10367"/>
        <dbReference type="Rhea" id="RHEA-COMP:10368"/>
        <dbReference type="ChEBI" id="CHEBI:15378"/>
        <dbReference type="ChEBI" id="CHEBI:57856"/>
        <dbReference type="ChEBI" id="CHEBI:59789"/>
        <dbReference type="ChEBI" id="CHEBI:73542"/>
        <dbReference type="ChEBI" id="CHEBI:74269"/>
        <dbReference type="EC" id="2.1.1.221"/>
    </reaction>
</comment>
<comment type="catalytic activity">
    <reaction evidence="1">
        <text>an adenosine in mRNA + S-adenosyl-L-methionine = an N(1)-methyladenosine in mRNA + S-adenosyl-L-homocysteine + H(+)</text>
        <dbReference type="Rhea" id="RHEA:55392"/>
        <dbReference type="Rhea" id="RHEA-COMP:12414"/>
        <dbReference type="Rhea" id="RHEA-COMP:12415"/>
        <dbReference type="ChEBI" id="CHEBI:15378"/>
        <dbReference type="ChEBI" id="CHEBI:57856"/>
        <dbReference type="ChEBI" id="CHEBI:59789"/>
        <dbReference type="ChEBI" id="CHEBI:74411"/>
        <dbReference type="ChEBI" id="CHEBI:74491"/>
    </reaction>
</comment>
<comment type="subunit">
    <text evidence="1">Component of mitochondrial ribonuclease P, a complex composed of TRMT10C/MRPP1, HSD17B10/MRPP2 and PRORP/MRPP3. Interacts with HSD17B10/MRPP2; forming the MRPP1-MRPP2 subcomplex of the mitochondrial ribonuclease P complex. Interacts with GRSF1.</text>
</comment>
<comment type="subcellular location">
    <subcellularLocation>
        <location evidence="1">Mitochondrion matrix</location>
        <location evidence="1">Mitochondrion nucleoid</location>
    </subcellularLocation>
</comment>
<comment type="similarity">
    <text evidence="3">Belongs to the class IV-like SAM-binding methyltransferase superfamily. TRM10 family.</text>
</comment>
<evidence type="ECO:0000250" key="1">
    <source>
        <dbReference type="UniProtKB" id="Q7L0Y3"/>
    </source>
</evidence>
<evidence type="ECO:0000255" key="2"/>
<evidence type="ECO:0000255" key="3">
    <source>
        <dbReference type="PROSITE-ProRule" id="PRU01012"/>
    </source>
</evidence>
<evidence type="ECO:0000305" key="4"/>
<evidence type="ECO:0000312" key="5">
    <source>
        <dbReference type="MGI" id="MGI:1196261"/>
    </source>
</evidence>
<evidence type="ECO:0007744" key="6">
    <source>
    </source>
</evidence>
<evidence type="ECO:0007744" key="7">
    <source>
    </source>
</evidence>
<feature type="transit peptide" description="Mitochondrion" evidence="2">
    <location>
        <begin position="1"/>
        <end position="35"/>
    </location>
</feature>
<feature type="chain" id="PRO_0000311310" description="tRNA methyltransferase 10 homolog C">
    <location>
        <begin position="36"/>
        <end position="414"/>
    </location>
</feature>
<feature type="domain" description="SAM-dependent MTase TRM10-type" evidence="3">
    <location>
        <begin position="186"/>
        <end position="378"/>
    </location>
</feature>
<feature type="coiled-coil region" evidence="2">
    <location>
        <begin position="133"/>
        <end position="171"/>
    </location>
</feature>
<feature type="modified residue" description="Phosphoserine" evidence="6 7">
    <location>
        <position position="79"/>
    </location>
</feature>
<feature type="sequence conflict" description="In Ref. 1; BAE28421." evidence="4" ref="1">
    <original>A</original>
    <variation>T</variation>
    <location>
        <position position="40"/>
    </location>
</feature>
<feature type="sequence conflict" description="In Ref. 1; BAE28421." evidence="4" ref="1">
    <original>D</original>
    <variation>E</variation>
    <location>
        <position position="111"/>
    </location>
</feature>
<feature type="sequence conflict" description="In Ref. 1; BAE28421." evidence="4" ref="1">
    <original>A</original>
    <variation>V</variation>
    <location>
        <position position="137"/>
    </location>
</feature>
<feature type="sequence conflict" description="In Ref. 1; BAE28421." evidence="4" ref="1">
    <original>E</original>
    <variation>G</variation>
    <location>
        <position position="226"/>
    </location>
</feature>
<feature type="sequence conflict" description="In Ref. 1; BAE28421." evidence="4" ref="1">
    <original>I</original>
    <variation>L</variation>
    <location>
        <position position="326"/>
    </location>
</feature>
<feature type="sequence conflict" description="In Ref. 2; AAI06132/AAH23147." evidence="4" ref="2">
    <original>N</original>
    <variation>S</variation>
    <location>
        <position position="363"/>
    </location>
</feature>
<feature type="sequence conflict" description="In Ref. 1; BAE28421." evidence="4" ref="1">
    <original>N</original>
    <variation>S</variation>
    <location>
        <position position="408"/>
    </location>
</feature>
<feature type="sequence conflict" description="In Ref. 1; BAE28421." evidence="4" ref="1">
    <original>V</original>
    <variation>A</variation>
    <location>
        <position position="409"/>
    </location>
</feature>
<reference key="1">
    <citation type="journal article" date="2005" name="Science">
        <title>The transcriptional landscape of the mammalian genome.</title>
        <authorList>
            <person name="Carninci P."/>
            <person name="Kasukawa T."/>
            <person name="Katayama S."/>
            <person name="Gough J."/>
            <person name="Frith M.C."/>
            <person name="Maeda N."/>
            <person name="Oyama R."/>
            <person name="Ravasi T."/>
            <person name="Lenhard B."/>
            <person name="Wells C."/>
            <person name="Kodzius R."/>
            <person name="Shimokawa K."/>
            <person name="Bajic V.B."/>
            <person name="Brenner S.E."/>
            <person name="Batalov S."/>
            <person name="Forrest A.R."/>
            <person name="Zavolan M."/>
            <person name="Davis M.J."/>
            <person name="Wilming L.G."/>
            <person name="Aidinis V."/>
            <person name="Allen J.E."/>
            <person name="Ambesi-Impiombato A."/>
            <person name="Apweiler R."/>
            <person name="Aturaliya R.N."/>
            <person name="Bailey T.L."/>
            <person name="Bansal M."/>
            <person name="Baxter L."/>
            <person name="Beisel K.W."/>
            <person name="Bersano T."/>
            <person name="Bono H."/>
            <person name="Chalk A.M."/>
            <person name="Chiu K.P."/>
            <person name="Choudhary V."/>
            <person name="Christoffels A."/>
            <person name="Clutterbuck D.R."/>
            <person name="Crowe M.L."/>
            <person name="Dalla E."/>
            <person name="Dalrymple B.P."/>
            <person name="de Bono B."/>
            <person name="Della Gatta G."/>
            <person name="di Bernardo D."/>
            <person name="Down T."/>
            <person name="Engstrom P."/>
            <person name="Fagiolini M."/>
            <person name="Faulkner G."/>
            <person name="Fletcher C.F."/>
            <person name="Fukushima T."/>
            <person name="Furuno M."/>
            <person name="Futaki S."/>
            <person name="Gariboldi M."/>
            <person name="Georgii-Hemming P."/>
            <person name="Gingeras T.R."/>
            <person name="Gojobori T."/>
            <person name="Green R.E."/>
            <person name="Gustincich S."/>
            <person name="Harbers M."/>
            <person name="Hayashi Y."/>
            <person name="Hensch T.K."/>
            <person name="Hirokawa N."/>
            <person name="Hill D."/>
            <person name="Huminiecki L."/>
            <person name="Iacono M."/>
            <person name="Ikeo K."/>
            <person name="Iwama A."/>
            <person name="Ishikawa T."/>
            <person name="Jakt M."/>
            <person name="Kanapin A."/>
            <person name="Katoh M."/>
            <person name="Kawasawa Y."/>
            <person name="Kelso J."/>
            <person name="Kitamura H."/>
            <person name="Kitano H."/>
            <person name="Kollias G."/>
            <person name="Krishnan S.P."/>
            <person name="Kruger A."/>
            <person name="Kummerfeld S.K."/>
            <person name="Kurochkin I.V."/>
            <person name="Lareau L.F."/>
            <person name="Lazarevic D."/>
            <person name="Lipovich L."/>
            <person name="Liu J."/>
            <person name="Liuni S."/>
            <person name="McWilliam S."/>
            <person name="Madan Babu M."/>
            <person name="Madera M."/>
            <person name="Marchionni L."/>
            <person name="Matsuda H."/>
            <person name="Matsuzawa S."/>
            <person name="Miki H."/>
            <person name="Mignone F."/>
            <person name="Miyake S."/>
            <person name="Morris K."/>
            <person name="Mottagui-Tabar S."/>
            <person name="Mulder N."/>
            <person name="Nakano N."/>
            <person name="Nakauchi H."/>
            <person name="Ng P."/>
            <person name="Nilsson R."/>
            <person name="Nishiguchi S."/>
            <person name="Nishikawa S."/>
            <person name="Nori F."/>
            <person name="Ohara O."/>
            <person name="Okazaki Y."/>
            <person name="Orlando V."/>
            <person name="Pang K.C."/>
            <person name="Pavan W.J."/>
            <person name="Pavesi G."/>
            <person name="Pesole G."/>
            <person name="Petrovsky N."/>
            <person name="Piazza S."/>
            <person name="Reed J."/>
            <person name="Reid J.F."/>
            <person name="Ring B.Z."/>
            <person name="Ringwald M."/>
            <person name="Rost B."/>
            <person name="Ruan Y."/>
            <person name="Salzberg S.L."/>
            <person name="Sandelin A."/>
            <person name="Schneider C."/>
            <person name="Schoenbach C."/>
            <person name="Sekiguchi K."/>
            <person name="Semple C.A."/>
            <person name="Seno S."/>
            <person name="Sessa L."/>
            <person name="Sheng Y."/>
            <person name="Shibata Y."/>
            <person name="Shimada H."/>
            <person name="Shimada K."/>
            <person name="Silva D."/>
            <person name="Sinclair B."/>
            <person name="Sperling S."/>
            <person name="Stupka E."/>
            <person name="Sugiura K."/>
            <person name="Sultana R."/>
            <person name="Takenaka Y."/>
            <person name="Taki K."/>
            <person name="Tammoja K."/>
            <person name="Tan S.L."/>
            <person name="Tang S."/>
            <person name="Taylor M.S."/>
            <person name="Tegner J."/>
            <person name="Teichmann S.A."/>
            <person name="Ueda H.R."/>
            <person name="van Nimwegen E."/>
            <person name="Verardo R."/>
            <person name="Wei C.L."/>
            <person name="Yagi K."/>
            <person name="Yamanishi H."/>
            <person name="Zabarovsky E."/>
            <person name="Zhu S."/>
            <person name="Zimmer A."/>
            <person name="Hide W."/>
            <person name="Bult C."/>
            <person name="Grimmond S.M."/>
            <person name="Teasdale R.D."/>
            <person name="Liu E.T."/>
            <person name="Brusic V."/>
            <person name="Quackenbush J."/>
            <person name="Wahlestedt C."/>
            <person name="Mattick J.S."/>
            <person name="Hume D.A."/>
            <person name="Kai C."/>
            <person name="Sasaki D."/>
            <person name="Tomaru Y."/>
            <person name="Fukuda S."/>
            <person name="Kanamori-Katayama M."/>
            <person name="Suzuki M."/>
            <person name="Aoki J."/>
            <person name="Arakawa T."/>
            <person name="Iida J."/>
            <person name="Imamura K."/>
            <person name="Itoh M."/>
            <person name="Kato T."/>
            <person name="Kawaji H."/>
            <person name="Kawagashira N."/>
            <person name="Kawashima T."/>
            <person name="Kojima M."/>
            <person name="Kondo S."/>
            <person name="Konno H."/>
            <person name="Nakano K."/>
            <person name="Ninomiya N."/>
            <person name="Nishio T."/>
            <person name="Okada M."/>
            <person name="Plessy C."/>
            <person name="Shibata K."/>
            <person name="Shiraki T."/>
            <person name="Suzuki S."/>
            <person name="Tagami M."/>
            <person name="Waki K."/>
            <person name="Watahiki A."/>
            <person name="Okamura-Oho Y."/>
            <person name="Suzuki H."/>
            <person name="Kawai J."/>
            <person name="Hayashizaki Y."/>
        </authorList>
    </citation>
    <scope>NUCLEOTIDE SEQUENCE [LARGE SCALE MRNA]</scope>
    <source>
        <strain>C57BL/6J</strain>
        <strain>NOD</strain>
        <tissue>Liver</tissue>
        <tissue>Muellerian duct</tissue>
        <tissue>Thymus</tissue>
    </source>
</reference>
<reference key="2">
    <citation type="journal article" date="2004" name="Genome Res.">
        <title>The status, quality, and expansion of the NIH full-length cDNA project: the Mammalian Gene Collection (MGC).</title>
        <authorList>
            <consortium name="The MGC Project Team"/>
        </authorList>
    </citation>
    <scope>NUCLEOTIDE SEQUENCE [LARGE SCALE MRNA]</scope>
    <source>
        <strain>FVB/N</strain>
        <tissue>Colon</tissue>
        <tissue>Mammary tumor</tissue>
    </source>
</reference>
<reference key="3">
    <citation type="journal article" date="2006" name="Mol. Cell. Proteomics">
        <title>Comprehensive identification of phosphorylation sites in postsynaptic density preparations.</title>
        <authorList>
            <person name="Trinidad J.C."/>
            <person name="Specht C.G."/>
            <person name="Thalhammer A."/>
            <person name="Schoepfer R."/>
            <person name="Burlingame A.L."/>
        </authorList>
    </citation>
    <scope>IDENTIFICATION BY MASS SPECTROMETRY [LARGE SCALE ANALYSIS]</scope>
    <source>
        <tissue>Brain</tissue>
    </source>
</reference>
<reference key="4">
    <citation type="journal article" date="2007" name="Proc. Natl. Acad. Sci. U.S.A.">
        <title>Large-scale phosphorylation analysis of mouse liver.</title>
        <authorList>
            <person name="Villen J."/>
            <person name="Beausoleil S.A."/>
            <person name="Gerber S.A."/>
            <person name="Gygi S.P."/>
        </authorList>
    </citation>
    <scope>PHOSPHORYLATION [LARGE SCALE ANALYSIS] AT SER-79</scope>
    <scope>IDENTIFICATION BY MASS SPECTROMETRY [LARGE SCALE ANALYSIS]</scope>
    <source>
        <tissue>Liver</tissue>
    </source>
</reference>
<reference key="5">
    <citation type="journal article" date="2010" name="Cell">
        <title>A tissue-specific atlas of mouse protein phosphorylation and expression.</title>
        <authorList>
            <person name="Huttlin E.L."/>
            <person name="Jedrychowski M.P."/>
            <person name="Elias J.E."/>
            <person name="Goswami T."/>
            <person name="Rad R."/>
            <person name="Beausoleil S.A."/>
            <person name="Villen J."/>
            <person name="Haas W."/>
            <person name="Sowa M.E."/>
            <person name="Gygi S.P."/>
        </authorList>
    </citation>
    <scope>PHOSPHORYLATION [LARGE SCALE ANALYSIS] AT SER-79</scope>
    <scope>IDENTIFICATION BY MASS SPECTROMETRY [LARGE SCALE ANALYSIS]</scope>
    <source>
        <tissue>Brown adipose tissue</tissue>
        <tissue>Heart</tissue>
        <tissue>Kidney</tissue>
        <tissue>Spleen</tissue>
    </source>
</reference>
<accession>Q3UFY8</accession>
<accession>Q8R588</accession>
<accession>Q9DBC1</accession>